<protein>
    <recommendedName>
        <fullName evidence="1">4-diphosphocytidyl-2-C-methyl-D-erythritol kinase</fullName>
        <shortName evidence="1">CMK</shortName>
        <ecNumber evidence="1">2.7.1.148</ecNumber>
    </recommendedName>
    <alternativeName>
        <fullName evidence="1">4-(cytidine-5'-diphospho)-2-C-methyl-D-erythritol kinase</fullName>
    </alternativeName>
</protein>
<dbReference type="EC" id="2.7.1.148" evidence="1"/>
<dbReference type="EMBL" id="CP000927">
    <property type="protein sequence ID" value="ABZ71297.1"/>
    <property type="molecule type" value="Genomic_DNA"/>
</dbReference>
<dbReference type="SMR" id="B0T7V9"/>
<dbReference type="STRING" id="366602.Caul_2169"/>
<dbReference type="KEGG" id="cak:Caul_2169"/>
<dbReference type="eggNOG" id="COG1947">
    <property type="taxonomic scope" value="Bacteria"/>
</dbReference>
<dbReference type="HOGENOM" id="CLU_053057_1_0_5"/>
<dbReference type="OrthoDB" id="9809438at2"/>
<dbReference type="UniPathway" id="UPA00056">
    <property type="reaction ID" value="UER00094"/>
</dbReference>
<dbReference type="GO" id="GO:0050515">
    <property type="term" value="F:4-(cytidine 5'-diphospho)-2-C-methyl-D-erythritol kinase activity"/>
    <property type="evidence" value="ECO:0007669"/>
    <property type="project" value="UniProtKB-UniRule"/>
</dbReference>
<dbReference type="GO" id="GO:0005524">
    <property type="term" value="F:ATP binding"/>
    <property type="evidence" value="ECO:0007669"/>
    <property type="project" value="UniProtKB-UniRule"/>
</dbReference>
<dbReference type="GO" id="GO:0019288">
    <property type="term" value="P:isopentenyl diphosphate biosynthetic process, methylerythritol 4-phosphate pathway"/>
    <property type="evidence" value="ECO:0007669"/>
    <property type="project" value="UniProtKB-UniRule"/>
</dbReference>
<dbReference type="GO" id="GO:0016114">
    <property type="term" value="P:terpenoid biosynthetic process"/>
    <property type="evidence" value="ECO:0007669"/>
    <property type="project" value="InterPro"/>
</dbReference>
<dbReference type="Gene3D" id="3.30.230.10">
    <property type="match status" value="1"/>
</dbReference>
<dbReference type="Gene3D" id="3.30.70.890">
    <property type="entry name" value="GHMP kinase, C-terminal domain"/>
    <property type="match status" value="1"/>
</dbReference>
<dbReference type="HAMAP" id="MF_00061">
    <property type="entry name" value="IspE"/>
    <property type="match status" value="1"/>
</dbReference>
<dbReference type="InterPro" id="IPR013750">
    <property type="entry name" value="GHMP_kinase_C_dom"/>
</dbReference>
<dbReference type="InterPro" id="IPR036554">
    <property type="entry name" value="GHMP_kinase_C_sf"/>
</dbReference>
<dbReference type="InterPro" id="IPR006204">
    <property type="entry name" value="GHMP_kinase_N_dom"/>
</dbReference>
<dbReference type="InterPro" id="IPR004424">
    <property type="entry name" value="IspE"/>
</dbReference>
<dbReference type="InterPro" id="IPR020568">
    <property type="entry name" value="Ribosomal_Su5_D2-typ_SF"/>
</dbReference>
<dbReference type="InterPro" id="IPR014721">
    <property type="entry name" value="Ribsml_uS5_D2-typ_fold_subgr"/>
</dbReference>
<dbReference type="NCBIfam" id="NF011202">
    <property type="entry name" value="PRK14608.1"/>
    <property type="match status" value="1"/>
</dbReference>
<dbReference type="PANTHER" id="PTHR43527">
    <property type="entry name" value="4-DIPHOSPHOCYTIDYL-2-C-METHYL-D-ERYTHRITOL KINASE, CHLOROPLASTIC"/>
    <property type="match status" value="1"/>
</dbReference>
<dbReference type="PANTHER" id="PTHR43527:SF2">
    <property type="entry name" value="4-DIPHOSPHOCYTIDYL-2-C-METHYL-D-ERYTHRITOL KINASE, CHLOROPLASTIC"/>
    <property type="match status" value="1"/>
</dbReference>
<dbReference type="Pfam" id="PF08544">
    <property type="entry name" value="GHMP_kinases_C"/>
    <property type="match status" value="1"/>
</dbReference>
<dbReference type="Pfam" id="PF00288">
    <property type="entry name" value="GHMP_kinases_N"/>
    <property type="match status" value="1"/>
</dbReference>
<dbReference type="PIRSF" id="PIRSF010376">
    <property type="entry name" value="IspE"/>
    <property type="match status" value="1"/>
</dbReference>
<dbReference type="SUPFAM" id="SSF55060">
    <property type="entry name" value="GHMP Kinase, C-terminal domain"/>
    <property type="match status" value="1"/>
</dbReference>
<dbReference type="SUPFAM" id="SSF54211">
    <property type="entry name" value="Ribosomal protein S5 domain 2-like"/>
    <property type="match status" value="1"/>
</dbReference>
<gene>
    <name evidence="1" type="primary">ispE</name>
    <name type="ordered locus">Caul_2169</name>
</gene>
<sequence>MRLDAFAPAKVNLFLHVGGPDAAGYHPISSLMLFADVGDRVSLQAADAPSFEATGWFGAEVPVDDGNLVVRAEMALRARLGGPTPPFRLILDKALPIAAGLGGGSSDAGAALRLLREALAPDLSDADLEAVAGGLGADGAACLWGAPVMARGRGERLSPAPALPALHAVLVNPLVPSPTGAVYRAYDAAVAPEGEAPPPMLDGLESIEEVCAWLAGFTRNDLQAPAVALEPRIGQVLDLLADEPETLLARMSGSGATCFALCAGDIEAEGLAERIEQMRPDWWVKRCRLGGPF</sequence>
<evidence type="ECO:0000255" key="1">
    <source>
        <dbReference type="HAMAP-Rule" id="MF_00061"/>
    </source>
</evidence>
<keyword id="KW-0067">ATP-binding</keyword>
<keyword id="KW-0414">Isoprene biosynthesis</keyword>
<keyword id="KW-0418">Kinase</keyword>
<keyword id="KW-0547">Nucleotide-binding</keyword>
<keyword id="KW-0808">Transferase</keyword>
<name>ISPE_CAUSK</name>
<comment type="function">
    <text evidence="1">Catalyzes the phosphorylation of the position 2 hydroxy group of 4-diphosphocytidyl-2C-methyl-D-erythritol.</text>
</comment>
<comment type="catalytic activity">
    <reaction evidence="1">
        <text>4-CDP-2-C-methyl-D-erythritol + ATP = 4-CDP-2-C-methyl-D-erythritol 2-phosphate + ADP + H(+)</text>
        <dbReference type="Rhea" id="RHEA:18437"/>
        <dbReference type="ChEBI" id="CHEBI:15378"/>
        <dbReference type="ChEBI" id="CHEBI:30616"/>
        <dbReference type="ChEBI" id="CHEBI:57823"/>
        <dbReference type="ChEBI" id="CHEBI:57919"/>
        <dbReference type="ChEBI" id="CHEBI:456216"/>
        <dbReference type="EC" id="2.7.1.148"/>
    </reaction>
</comment>
<comment type="pathway">
    <text evidence="1">Isoprenoid biosynthesis; isopentenyl diphosphate biosynthesis via DXP pathway; isopentenyl diphosphate from 1-deoxy-D-xylulose 5-phosphate: step 3/6.</text>
</comment>
<comment type="similarity">
    <text evidence="1">Belongs to the GHMP kinase family. IspE subfamily.</text>
</comment>
<feature type="chain" id="PRO_0000335704" description="4-diphosphocytidyl-2-C-methyl-D-erythritol kinase">
    <location>
        <begin position="1"/>
        <end position="293"/>
    </location>
</feature>
<feature type="active site" evidence="1">
    <location>
        <position position="10"/>
    </location>
</feature>
<feature type="active site" evidence="1">
    <location>
        <position position="138"/>
    </location>
</feature>
<feature type="binding site" evidence="1">
    <location>
        <begin position="96"/>
        <end position="106"/>
    </location>
    <ligand>
        <name>ATP</name>
        <dbReference type="ChEBI" id="CHEBI:30616"/>
    </ligand>
</feature>
<accession>B0T7V9</accession>
<proteinExistence type="inferred from homology"/>
<reference key="1">
    <citation type="submission" date="2008-01" db="EMBL/GenBank/DDBJ databases">
        <title>Complete sequence of chromosome of Caulobacter sp. K31.</title>
        <authorList>
            <consortium name="US DOE Joint Genome Institute"/>
            <person name="Copeland A."/>
            <person name="Lucas S."/>
            <person name="Lapidus A."/>
            <person name="Barry K."/>
            <person name="Glavina del Rio T."/>
            <person name="Dalin E."/>
            <person name="Tice H."/>
            <person name="Pitluck S."/>
            <person name="Bruce D."/>
            <person name="Goodwin L."/>
            <person name="Thompson L.S."/>
            <person name="Brettin T."/>
            <person name="Detter J.C."/>
            <person name="Han C."/>
            <person name="Schmutz J."/>
            <person name="Larimer F."/>
            <person name="Land M."/>
            <person name="Hauser L."/>
            <person name="Kyrpides N."/>
            <person name="Kim E."/>
            <person name="Stephens C."/>
            <person name="Richardson P."/>
        </authorList>
    </citation>
    <scope>NUCLEOTIDE SEQUENCE [LARGE SCALE GENOMIC DNA]</scope>
    <source>
        <strain>K31</strain>
    </source>
</reference>
<organism>
    <name type="scientific">Caulobacter sp. (strain K31)</name>
    <dbReference type="NCBI Taxonomy" id="366602"/>
    <lineage>
        <taxon>Bacteria</taxon>
        <taxon>Pseudomonadati</taxon>
        <taxon>Pseudomonadota</taxon>
        <taxon>Alphaproteobacteria</taxon>
        <taxon>Caulobacterales</taxon>
        <taxon>Caulobacteraceae</taxon>
        <taxon>Caulobacter</taxon>
    </lineage>
</organism>